<sequence>MTKGILGRKVGMTQVFGENGELIPVTVVEAAQNVVLQKKTEEVDGYSSIQIGFEDKQAYKADRKSNKFATKPAEGHAKKAGTAPKRFIREFRNVDTEAYEVGQEVTVDTFQTGDIVDVTGVSKGKGFQGAIKRHGQSRGPMSHGSRYHRRPGSMGMASDASKVFKGKALPGRMGGNTVTMQNLEIVKVDAENNVILVKGNVPGPKKGLVKIQTSIKKGNK</sequence>
<gene>
    <name evidence="1" type="primary">rplC</name>
    <name type="ordered locus">MCCL_0195</name>
</gene>
<comment type="function">
    <text evidence="1">One of the primary rRNA binding proteins, it binds directly near the 3'-end of the 23S rRNA, where it nucleates assembly of the 50S subunit.</text>
</comment>
<comment type="subunit">
    <text evidence="1">Part of the 50S ribosomal subunit. Forms a cluster with proteins L14 and L19.</text>
</comment>
<comment type="similarity">
    <text evidence="1">Belongs to the universal ribosomal protein uL3 family.</text>
</comment>
<keyword id="KW-1185">Reference proteome</keyword>
<keyword id="KW-0687">Ribonucleoprotein</keyword>
<keyword id="KW-0689">Ribosomal protein</keyword>
<keyword id="KW-0694">RNA-binding</keyword>
<keyword id="KW-0699">rRNA-binding</keyword>
<organism>
    <name type="scientific">Macrococcus caseolyticus (strain JCSC5402)</name>
    <name type="common">Macrococcoides caseolyticum</name>
    <dbReference type="NCBI Taxonomy" id="458233"/>
    <lineage>
        <taxon>Bacteria</taxon>
        <taxon>Bacillati</taxon>
        <taxon>Bacillota</taxon>
        <taxon>Bacilli</taxon>
        <taxon>Bacillales</taxon>
        <taxon>Staphylococcaceae</taxon>
        <taxon>Macrococcoides</taxon>
    </lineage>
</organism>
<accession>B9E9J1</accession>
<proteinExistence type="inferred from homology"/>
<reference key="1">
    <citation type="journal article" date="2009" name="J. Bacteriol.">
        <title>Complete genome sequence of Macrococcus caseolyticus strain JCSCS5402, reflecting the ancestral genome of the human-pathogenic staphylococci.</title>
        <authorList>
            <person name="Baba T."/>
            <person name="Kuwahara-Arai K."/>
            <person name="Uchiyama I."/>
            <person name="Takeuchi F."/>
            <person name="Ito T."/>
            <person name="Hiramatsu K."/>
        </authorList>
    </citation>
    <scope>NUCLEOTIDE SEQUENCE [LARGE SCALE GENOMIC DNA]</scope>
    <source>
        <strain>JCSC5402</strain>
    </source>
</reference>
<name>RL3_MACCJ</name>
<dbReference type="EMBL" id="AP009484">
    <property type="protein sequence ID" value="BAH16902.1"/>
    <property type="molecule type" value="Genomic_DNA"/>
</dbReference>
<dbReference type="RefSeq" id="WP_012656106.1">
    <property type="nucleotide sequence ID" value="NC_011999.1"/>
</dbReference>
<dbReference type="SMR" id="B9E9J1"/>
<dbReference type="STRING" id="458233.MCCL_0195"/>
<dbReference type="GeneID" id="61130617"/>
<dbReference type="KEGG" id="mcl:MCCL_0195"/>
<dbReference type="eggNOG" id="COG0087">
    <property type="taxonomic scope" value="Bacteria"/>
</dbReference>
<dbReference type="HOGENOM" id="CLU_044142_4_1_9"/>
<dbReference type="OrthoDB" id="9806135at2"/>
<dbReference type="Proteomes" id="UP000001383">
    <property type="component" value="Chromosome"/>
</dbReference>
<dbReference type="GO" id="GO:0022625">
    <property type="term" value="C:cytosolic large ribosomal subunit"/>
    <property type="evidence" value="ECO:0007669"/>
    <property type="project" value="TreeGrafter"/>
</dbReference>
<dbReference type="GO" id="GO:0019843">
    <property type="term" value="F:rRNA binding"/>
    <property type="evidence" value="ECO:0007669"/>
    <property type="project" value="UniProtKB-UniRule"/>
</dbReference>
<dbReference type="GO" id="GO:0003735">
    <property type="term" value="F:structural constituent of ribosome"/>
    <property type="evidence" value="ECO:0007669"/>
    <property type="project" value="InterPro"/>
</dbReference>
<dbReference type="GO" id="GO:0006412">
    <property type="term" value="P:translation"/>
    <property type="evidence" value="ECO:0007669"/>
    <property type="project" value="UniProtKB-UniRule"/>
</dbReference>
<dbReference type="FunFam" id="2.40.30.10:FF:000004">
    <property type="entry name" value="50S ribosomal protein L3"/>
    <property type="match status" value="1"/>
</dbReference>
<dbReference type="FunFam" id="3.30.160.810:FF:000002">
    <property type="entry name" value="50S ribosomal protein L3"/>
    <property type="match status" value="1"/>
</dbReference>
<dbReference type="Gene3D" id="3.30.160.810">
    <property type="match status" value="1"/>
</dbReference>
<dbReference type="Gene3D" id="2.40.30.10">
    <property type="entry name" value="Translation factors"/>
    <property type="match status" value="1"/>
</dbReference>
<dbReference type="HAMAP" id="MF_01325_B">
    <property type="entry name" value="Ribosomal_uL3_B"/>
    <property type="match status" value="1"/>
</dbReference>
<dbReference type="InterPro" id="IPR000597">
    <property type="entry name" value="Ribosomal_uL3"/>
</dbReference>
<dbReference type="InterPro" id="IPR019927">
    <property type="entry name" value="Ribosomal_uL3_bac/org-type"/>
</dbReference>
<dbReference type="InterPro" id="IPR019926">
    <property type="entry name" value="Ribosomal_uL3_CS"/>
</dbReference>
<dbReference type="InterPro" id="IPR009000">
    <property type="entry name" value="Transl_B-barrel_sf"/>
</dbReference>
<dbReference type="NCBIfam" id="TIGR03625">
    <property type="entry name" value="L3_bact"/>
    <property type="match status" value="1"/>
</dbReference>
<dbReference type="PANTHER" id="PTHR11229">
    <property type="entry name" value="50S RIBOSOMAL PROTEIN L3"/>
    <property type="match status" value="1"/>
</dbReference>
<dbReference type="PANTHER" id="PTHR11229:SF16">
    <property type="entry name" value="LARGE RIBOSOMAL SUBUNIT PROTEIN UL3C"/>
    <property type="match status" value="1"/>
</dbReference>
<dbReference type="Pfam" id="PF00297">
    <property type="entry name" value="Ribosomal_L3"/>
    <property type="match status" value="1"/>
</dbReference>
<dbReference type="SUPFAM" id="SSF50447">
    <property type="entry name" value="Translation proteins"/>
    <property type="match status" value="1"/>
</dbReference>
<dbReference type="PROSITE" id="PS00474">
    <property type="entry name" value="RIBOSOMAL_L3"/>
    <property type="match status" value="1"/>
</dbReference>
<evidence type="ECO:0000255" key="1">
    <source>
        <dbReference type="HAMAP-Rule" id="MF_01325"/>
    </source>
</evidence>
<evidence type="ECO:0000256" key="2">
    <source>
        <dbReference type="SAM" id="MobiDB-lite"/>
    </source>
</evidence>
<evidence type="ECO:0000305" key="3"/>
<feature type="chain" id="PRO_1000165892" description="Large ribosomal subunit protein uL3">
    <location>
        <begin position="1"/>
        <end position="220"/>
    </location>
</feature>
<feature type="region of interest" description="Disordered" evidence="2">
    <location>
        <begin position="126"/>
        <end position="158"/>
    </location>
</feature>
<protein>
    <recommendedName>
        <fullName evidence="1">Large ribosomal subunit protein uL3</fullName>
    </recommendedName>
    <alternativeName>
        <fullName evidence="3">50S ribosomal protein L3</fullName>
    </alternativeName>
</protein>